<name>IOVO_BAMTH</name>
<proteinExistence type="evidence at protein level"/>
<keyword id="KW-0903">Direct protein sequencing</keyword>
<keyword id="KW-1015">Disulfide bond</keyword>
<keyword id="KW-0325">Glycoprotein</keyword>
<keyword id="KW-0646">Protease inhibitor</keyword>
<keyword id="KW-0677">Repeat</keyword>
<keyword id="KW-0964">Secreted</keyword>
<keyword id="KW-0722">Serine protease inhibitor</keyword>
<evidence type="ECO:0000255" key="1">
    <source>
        <dbReference type="PROSITE-ProRule" id="PRU00798"/>
    </source>
</evidence>
<sequence>LAAVSVDCSEYPKPECTAEERPICGSDNKTYGNKCNFCNAVVESNGTLTLRNFGKC</sequence>
<accession>P52259</accession>
<dbReference type="PIR" id="A61493">
    <property type="entry name" value="A61493"/>
</dbReference>
<dbReference type="SMR" id="P52259"/>
<dbReference type="GO" id="GO:0005576">
    <property type="term" value="C:extracellular region"/>
    <property type="evidence" value="ECO:0007669"/>
    <property type="project" value="UniProtKB-SubCell"/>
</dbReference>
<dbReference type="GO" id="GO:0004867">
    <property type="term" value="F:serine-type endopeptidase inhibitor activity"/>
    <property type="evidence" value="ECO:0007669"/>
    <property type="project" value="UniProtKB-KW"/>
</dbReference>
<dbReference type="CDD" id="cd00104">
    <property type="entry name" value="KAZAL_FS"/>
    <property type="match status" value="1"/>
</dbReference>
<dbReference type="FunFam" id="3.30.60.30:FF:000037">
    <property type="entry name" value="Ovomucoid"/>
    <property type="match status" value="1"/>
</dbReference>
<dbReference type="Gene3D" id="3.30.60.30">
    <property type="match status" value="1"/>
</dbReference>
<dbReference type="InterPro" id="IPR050159">
    <property type="entry name" value="Kazal-type_SerProtInhib"/>
</dbReference>
<dbReference type="InterPro" id="IPR002350">
    <property type="entry name" value="Kazal_dom"/>
</dbReference>
<dbReference type="InterPro" id="IPR036058">
    <property type="entry name" value="Kazal_dom_sf"/>
</dbReference>
<dbReference type="InterPro" id="IPR001239">
    <property type="entry name" value="Prot_inh_Kazal-m"/>
</dbReference>
<dbReference type="PANTHER" id="PTHR47499:SF1">
    <property type="entry name" value="SERINE PROTEASE INHIBITOR KAZAL-TYPE 7"/>
    <property type="match status" value="1"/>
</dbReference>
<dbReference type="PANTHER" id="PTHR47499">
    <property type="entry name" value="SERINE PROTEASE INHIBITOR KAZAL-TYPE 7 SPINK7"/>
    <property type="match status" value="1"/>
</dbReference>
<dbReference type="Pfam" id="PF00050">
    <property type="entry name" value="Kazal_1"/>
    <property type="match status" value="1"/>
</dbReference>
<dbReference type="PRINTS" id="PR00290">
    <property type="entry name" value="KAZALINHBTR"/>
</dbReference>
<dbReference type="SMART" id="SM00280">
    <property type="entry name" value="KAZAL"/>
    <property type="match status" value="1"/>
</dbReference>
<dbReference type="SUPFAM" id="SSF100895">
    <property type="entry name" value="Kazal-type serine protease inhibitors"/>
    <property type="match status" value="1"/>
</dbReference>
<dbReference type="PROSITE" id="PS00282">
    <property type="entry name" value="KAZAL_1"/>
    <property type="match status" value="1"/>
</dbReference>
<dbReference type="PROSITE" id="PS51465">
    <property type="entry name" value="KAZAL_2"/>
    <property type="match status" value="1"/>
</dbReference>
<comment type="subcellular location">
    <subcellularLocation>
        <location>Secreted</location>
    </subcellularLocation>
</comment>
<comment type="domain">
    <text>Avian ovomucoid consists of three homologous, tandem Kazal family inhibitory domains.</text>
</comment>
<protein>
    <recommendedName>
        <fullName>Ovomucoid</fullName>
    </recommendedName>
</protein>
<organism>
    <name type="scientific">Bambusicola thoracicus</name>
    <name type="common">Chinese bamboo-partridge</name>
    <name type="synonym">Perdix thoracica</name>
    <dbReference type="NCBI Taxonomy" id="9083"/>
    <lineage>
        <taxon>Eukaryota</taxon>
        <taxon>Metazoa</taxon>
        <taxon>Chordata</taxon>
        <taxon>Craniata</taxon>
        <taxon>Vertebrata</taxon>
        <taxon>Euteleostomi</taxon>
        <taxon>Archelosauria</taxon>
        <taxon>Archosauria</taxon>
        <taxon>Dinosauria</taxon>
        <taxon>Saurischia</taxon>
        <taxon>Theropoda</taxon>
        <taxon>Coelurosauria</taxon>
        <taxon>Aves</taxon>
        <taxon>Neognathae</taxon>
        <taxon>Galloanserae</taxon>
        <taxon>Galliformes</taxon>
        <taxon>Phasianidae</taxon>
        <taxon>Perdicinae</taxon>
        <taxon>Bambusicola</taxon>
    </lineage>
</organism>
<feature type="chain" id="PRO_0000073068" description="Ovomucoid">
    <location>
        <begin position="1" status="less than"/>
        <end position="56" status="greater than"/>
    </location>
</feature>
<feature type="domain" description="Kazal-like" evidence="1">
    <location>
        <begin position="6"/>
        <end position="56"/>
    </location>
</feature>
<feature type="site" description="Reactive bond 3">
    <location>
        <begin position="18"/>
        <end position="19"/>
    </location>
</feature>
<feature type="glycosylation site" description="N-linked (GlcNAc...) asparagine">
    <location>
        <position position="45"/>
    </location>
</feature>
<feature type="disulfide bond">
    <location>
        <begin position="8"/>
        <end position="38"/>
    </location>
</feature>
<feature type="disulfide bond">
    <location>
        <begin position="16"/>
        <end position="35"/>
    </location>
</feature>
<feature type="disulfide bond">
    <location>
        <begin position="24"/>
        <end position="56"/>
    </location>
</feature>
<feature type="non-terminal residue">
    <location>
        <position position="1"/>
    </location>
</feature>
<feature type="non-terminal residue">
    <location>
        <position position="56"/>
    </location>
</feature>
<reference key="1">
    <citation type="journal article" date="1990" name="J. Protein Chem.">
        <title>Amino acid sequences of ovomucoid third domain from 25 additional species of birds.</title>
        <authorList>
            <person name="Laskowski M. Jr."/>
            <person name="Apostol I."/>
            <person name="Ardelt W."/>
            <person name="Cook J."/>
            <person name="Giletto A."/>
            <person name="Kelly C.A."/>
            <person name="Lu W."/>
            <person name="Park S.J."/>
            <person name="Qasim M.A."/>
            <person name="Whatley H.E."/>
            <person name="Wieczorek A."/>
            <person name="Wynn R."/>
        </authorList>
    </citation>
    <scope>PROTEIN SEQUENCE</scope>
</reference>